<name>IF2_PSEA6</name>
<feature type="chain" id="PRO_1000008301" description="Translation initiation factor IF-2">
    <location>
        <begin position="1"/>
        <end position="869"/>
    </location>
</feature>
<feature type="domain" description="tr-type G">
    <location>
        <begin position="369"/>
        <end position="542"/>
    </location>
</feature>
<feature type="region of interest" description="Disordered" evidence="3">
    <location>
        <begin position="51"/>
        <end position="78"/>
    </location>
</feature>
<feature type="region of interest" description="Disordered" evidence="3">
    <location>
        <begin position="105"/>
        <end position="277"/>
    </location>
</feature>
<feature type="region of interest" description="G1" evidence="1">
    <location>
        <begin position="378"/>
        <end position="385"/>
    </location>
</feature>
<feature type="region of interest" description="G2" evidence="1">
    <location>
        <begin position="403"/>
        <end position="407"/>
    </location>
</feature>
<feature type="region of interest" description="G3" evidence="1">
    <location>
        <begin position="424"/>
        <end position="427"/>
    </location>
</feature>
<feature type="region of interest" description="G4" evidence="1">
    <location>
        <begin position="478"/>
        <end position="481"/>
    </location>
</feature>
<feature type="region of interest" description="G5" evidence="1">
    <location>
        <begin position="514"/>
        <end position="516"/>
    </location>
</feature>
<feature type="compositionally biased region" description="Polar residues" evidence="3">
    <location>
        <begin position="67"/>
        <end position="76"/>
    </location>
</feature>
<feature type="compositionally biased region" description="Low complexity" evidence="3">
    <location>
        <begin position="110"/>
        <end position="119"/>
    </location>
</feature>
<feature type="compositionally biased region" description="Basic and acidic residues" evidence="3">
    <location>
        <begin position="120"/>
        <end position="241"/>
    </location>
</feature>
<feature type="binding site" evidence="2">
    <location>
        <begin position="378"/>
        <end position="385"/>
    </location>
    <ligand>
        <name>GTP</name>
        <dbReference type="ChEBI" id="CHEBI:37565"/>
    </ligand>
</feature>
<feature type="binding site" evidence="2">
    <location>
        <begin position="424"/>
        <end position="428"/>
    </location>
    <ligand>
        <name>GTP</name>
        <dbReference type="ChEBI" id="CHEBI:37565"/>
    </ligand>
</feature>
<feature type="binding site" evidence="2">
    <location>
        <begin position="478"/>
        <end position="481"/>
    </location>
    <ligand>
        <name>GTP</name>
        <dbReference type="ChEBI" id="CHEBI:37565"/>
    </ligand>
</feature>
<gene>
    <name evidence="2" type="primary">infB</name>
    <name type="ordered locus">Patl_1695</name>
</gene>
<keyword id="KW-0963">Cytoplasm</keyword>
<keyword id="KW-0342">GTP-binding</keyword>
<keyword id="KW-0396">Initiation factor</keyword>
<keyword id="KW-0547">Nucleotide-binding</keyword>
<keyword id="KW-0648">Protein biosynthesis</keyword>
<protein>
    <recommendedName>
        <fullName evidence="2">Translation initiation factor IF-2</fullName>
    </recommendedName>
</protein>
<accession>Q15V72</accession>
<proteinExistence type="inferred from homology"/>
<comment type="function">
    <text evidence="2">One of the essential components for the initiation of protein synthesis. Protects formylmethionyl-tRNA from spontaneous hydrolysis and promotes its binding to the 30S ribosomal subunits. Also involved in the hydrolysis of GTP during the formation of the 70S ribosomal complex.</text>
</comment>
<comment type="subcellular location">
    <subcellularLocation>
        <location evidence="2">Cytoplasm</location>
    </subcellularLocation>
</comment>
<comment type="similarity">
    <text evidence="2">Belongs to the TRAFAC class translation factor GTPase superfamily. Classic translation factor GTPase family. IF-2 subfamily.</text>
</comment>
<dbReference type="EMBL" id="CP000388">
    <property type="protein sequence ID" value="ABG40216.1"/>
    <property type="molecule type" value="Genomic_DNA"/>
</dbReference>
<dbReference type="RefSeq" id="WP_011574521.1">
    <property type="nucleotide sequence ID" value="NC_008228.1"/>
</dbReference>
<dbReference type="SMR" id="Q15V72"/>
<dbReference type="STRING" id="342610.Patl_1695"/>
<dbReference type="KEGG" id="pat:Patl_1695"/>
<dbReference type="eggNOG" id="COG0532">
    <property type="taxonomic scope" value="Bacteria"/>
</dbReference>
<dbReference type="HOGENOM" id="CLU_006301_6_3_6"/>
<dbReference type="OrthoDB" id="9811804at2"/>
<dbReference type="Proteomes" id="UP000001981">
    <property type="component" value="Chromosome"/>
</dbReference>
<dbReference type="GO" id="GO:0005829">
    <property type="term" value="C:cytosol"/>
    <property type="evidence" value="ECO:0007669"/>
    <property type="project" value="TreeGrafter"/>
</dbReference>
<dbReference type="GO" id="GO:0005525">
    <property type="term" value="F:GTP binding"/>
    <property type="evidence" value="ECO:0007669"/>
    <property type="project" value="UniProtKB-KW"/>
</dbReference>
<dbReference type="GO" id="GO:0003924">
    <property type="term" value="F:GTPase activity"/>
    <property type="evidence" value="ECO:0007669"/>
    <property type="project" value="UniProtKB-UniRule"/>
</dbReference>
<dbReference type="GO" id="GO:0097216">
    <property type="term" value="F:guanosine tetraphosphate binding"/>
    <property type="evidence" value="ECO:0007669"/>
    <property type="project" value="UniProtKB-ARBA"/>
</dbReference>
<dbReference type="GO" id="GO:0003743">
    <property type="term" value="F:translation initiation factor activity"/>
    <property type="evidence" value="ECO:0007669"/>
    <property type="project" value="UniProtKB-UniRule"/>
</dbReference>
<dbReference type="CDD" id="cd01887">
    <property type="entry name" value="IF2_eIF5B"/>
    <property type="match status" value="1"/>
</dbReference>
<dbReference type="CDD" id="cd03702">
    <property type="entry name" value="IF2_mtIF2_II"/>
    <property type="match status" value="1"/>
</dbReference>
<dbReference type="CDD" id="cd03692">
    <property type="entry name" value="mtIF2_IVc"/>
    <property type="match status" value="1"/>
</dbReference>
<dbReference type="FunFam" id="2.40.30.10:FF:000007">
    <property type="entry name" value="Translation initiation factor IF-2"/>
    <property type="match status" value="1"/>
</dbReference>
<dbReference type="FunFam" id="2.40.30.10:FF:000008">
    <property type="entry name" value="Translation initiation factor IF-2"/>
    <property type="match status" value="1"/>
</dbReference>
<dbReference type="FunFam" id="3.40.50.10050:FF:000001">
    <property type="entry name" value="Translation initiation factor IF-2"/>
    <property type="match status" value="1"/>
</dbReference>
<dbReference type="FunFam" id="3.40.50.300:FF:000019">
    <property type="entry name" value="Translation initiation factor IF-2"/>
    <property type="match status" value="1"/>
</dbReference>
<dbReference type="Gene3D" id="3.40.50.300">
    <property type="entry name" value="P-loop containing nucleotide triphosphate hydrolases"/>
    <property type="match status" value="1"/>
</dbReference>
<dbReference type="Gene3D" id="3.30.56.50">
    <property type="entry name" value="Putative DNA-binding domain, N-terminal subdomain of bacterial translation initiation factor IF2"/>
    <property type="match status" value="1"/>
</dbReference>
<dbReference type="Gene3D" id="2.40.30.10">
    <property type="entry name" value="Translation factors"/>
    <property type="match status" value="2"/>
</dbReference>
<dbReference type="Gene3D" id="3.40.50.10050">
    <property type="entry name" value="Translation initiation factor IF- 2, domain 3"/>
    <property type="match status" value="1"/>
</dbReference>
<dbReference type="HAMAP" id="MF_00100_B">
    <property type="entry name" value="IF_2_B"/>
    <property type="match status" value="1"/>
</dbReference>
<dbReference type="InterPro" id="IPR009061">
    <property type="entry name" value="DNA-bd_dom_put_sf"/>
</dbReference>
<dbReference type="InterPro" id="IPR053905">
    <property type="entry name" value="EF-G-like_DII"/>
</dbReference>
<dbReference type="InterPro" id="IPR004161">
    <property type="entry name" value="EFTu-like_2"/>
</dbReference>
<dbReference type="InterPro" id="IPR013575">
    <property type="entry name" value="IF2_assoc_dom_bac"/>
</dbReference>
<dbReference type="InterPro" id="IPR044145">
    <property type="entry name" value="IF2_II"/>
</dbReference>
<dbReference type="InterPro" id="IPR006847">
    <property type="entry name" value="IF2_N"/>
</dbReference>
<dbReference type="InterPro" id="IPR027417">
    <property type="entry name" value="P-loop_NTPase"/>
</dbReference>
<dbReference type="InterPro" id="IPR005225">
    <property type="entry name" value="Small_GTP-bd"/>
</dbReference>
<dbReference type="InterPro" id="IPR000795">
    <property type="entry name" value="T_Tr_GTP-bd_dom"/>
</dbReference>
<dbReference type="InterPro" id="IPR000178">
    <property type="entry name" value="TF_IF2_bacterial-like"/>
</dbReference>
<dbReference type="InterPro" id="IPR015760">
    <property type="entry name" value="TIF_IF2"/>
</dbReference>
<dbReference type="InterPro" id="IPR023115">
    <property type="entry name" value="TIF_IF2_dom3"/>
</dbReference>
<dbReference type="InterPro" id="IPR036925">
    <property type="entry name" value="TIF_IF2_dom3_sf"/>
</dbReference>
<dbReference type="InterPro" id="IPR009000">
    <property type="entry name" value="Transl_B-barrel_sf"/>
</dbReference>
<dbReference type="NCBIfam" id="TIGR00487">
    <property type="entry name" value="IF-2"/>
    <property type="match status" value="1"/>
</dbReference>
<dbReference type="NCBIfam" id="TIGR00231">
    <property type="entry name" value="small_GTP"/>
    <property type="match status" value="1"/>
</dbReference>
<dbReference type="PANTHER" id="PTHR43381:SF5">
    <property type="entry name" value="TR-TYPE G DOMAIN-CONTAINING PROTEIN"/>
    <property type="match status" value="1"/>
</dbReference>
<dbReference type="PANTHER" id="PTHR43381">
    <property type="entry name" value="TRANSLATION INITIATION FACTOR IF-2-RELATED"/>
    <property type="match status" value="1"/>
</dbReference>
<dbReference type="Pfam" id="PF22042">
    <property type="entry name" value="EF-G_D2"/>
    <property type="match status" value="1"/>
</dbReference>
<dbReference type="Pfam" id="PF00009">
    <property type="entry name" value="GTP_EFTU"/>
    <property type="match status" value="1"/>
</dbReference>
<dbReference type="Pfam" id="PF03144">
    <property type="entry name" value="GTP_EFTU_D2"/>
    <property type="match status" value="1"/>
</dbReference>
<dbReference type="Pfam" id="PF11987">
    <property type="entry name" value="IF-2"/>
    <property type="match status" value="1"/>
</dbReference>
<dbReference type="Pfam" id="PF08364">
    <property type="entry name" value="IF2_assoc"/>
    <property type="match status" value="1"/>
</dbReference>
<dbReference type="Pfam" id="PF04760">
    <property type="entry name" value="IF2_N"/>
    <property type="match status" value="2"/>
</dbReference>
<dbReference type="SUPFAM" id="SSF52156">
    <property type="entry name" value="Initiation factor IF2/eIF5b, domain 3"/>
    <property type="match status" value="1"/>
</dbReference>
<dbReference type="SUPFAM" id="SSF52540">
    <property type="entry name" value="P-loop containing nucleoside triphosphate hydrolases"/>
    <property type="match status" value="1"/>
</dbReference>
<dbReference type="SUPFAM" id="SSF46955">
    <property type="entry name" value="Putative DNA-binding domain"/>
    <property type="match status" value="1"/>
</dbReference>
<dbReference type="SUPFAM" id="SSF50447">
    <property type="entry name" value="Translation proteins"/>
    <property type="match status" value="2"/>
</dbReference>
<dbReference type="PROSITE" id="PS51722">
    <property type="entry name" value="G_TR_2"/>
    <property type="match status" value="1"/>
</dbReference>
<dbReference type="PROSITE" id="PS01176">
    <property type="entry name" value="IF2"/>
    <property type="match status" value="1"/>
</dbReference>
<organism>
    <name type="scientific">Pseudoalteromonas atlantica (strain T6c / ATCC BAA-1087)</name>
    <dbReference type="NCBI Taxonomy" id="3042615"/>
    <lineage>
        <taxon>Bacteria</taxon>
        <taxon>Pseudomonadati</taxon>
        <taxon>Pseudomonadota</taxon>
        <taxon>Gammaproteobacteria</taxon>
        <taxon>Alteromonadales</taxon>
        <taxon>Alteromonadaceae</taxon>
        <taxon>Paraglaciecola</taxon>
    </lineage>
</organism>
<reference key="1">
    <citation type="submission" date="2006-06" db="EMBL/GenBank/DDBJ databases">
        <title>Complete sequence of Pseudoalteromonas atlantica T6c.</title>
        <authorList>
            <consortium name="US DOE Joint Genome Institute"/>
            <person name="Copeland A."/>
            <person name="Lucas S."/>
            <person name="Lapidus A."/>
            <person name="Barry K."/>
            <person name="Detter J.C."/>
            <person name="Glavina del Rio T."/>
            <person name="Hammon N."/>
            <person name="Israni S."/>
            <person name="Dalin E."/>
            <person name="Tice H."/>
            <person name="Pitluck S."/>
            <person name="Saunders E."/>
            <person name="Brettin T."/>
            <person name="Bruce D."/>
            <person name="Han C."/>
            <person name="Tapia R."/>
            <person name="Gilna P."/>
            <person name="Schmutz J."/>
            <person name="Larimer F."/>
            <person name="Land M."/>
            <person name="Hauser L."/>
            <person name="Kyrpides N."/>
            <person name="Kim E."/>
            <person name="Karls A.C."/>
            <person name="Bartlett D."/>
            <person name="Higgins B.P."/>
            <person name="Richardson P."/>
        </authorList>
    </citation>
    <scope>NUCLEOTIDE SEQUENCE [LARGE SCALE GENOMIC DNA]</scope>
    <source>
        <strain>T6c / ATCC BAA-1087</strain>
    </source>
</reference>
<evidence type="ECO:0000250" key="1"/>
<evidence type="ECO:0000255" key="2">
    <source>
        <dbReference type="HAMAP-Rule" id="MF_00100"/>
    </source>
</evidence>
<evidence type="ECO:0000256" key="3">
    <source>
        <dbReference type="SAM" id="MobiDB-lite"/>
    </source>
</evidence>
<sequence length="869" mass="94943">MAEVSIEKLAADIGTSVDRLVKQFKDADIVKAANENVTEDEKRQLLDYLSKQHGGTGSEAPKRMTLQRKTTSTLNMGKSKAVTVEVRKKRTYVKRTDVEEARLAEEETARALAEQQAQLEAEKAAAEEAKKAAEEKAKKAAESKAKAEAERLARAEKAKKEAEARQAEESALSPEEKAEQERVRTEAENIRKKQEQESQRKLEEDAKKAADEARKLAEENSRRWKEEEERRKKQEAEEVHVHSNRYAQEAEDADDIKIERGGRRRKKSKRNAGSDLKHAFNKPAQPVERIVRLGETITVSDLASKLAIKATEVIKAMMKMGEMATINQVLDQETAVLVVEEMGHKYELVNDNALEDELLADKISSELASRAPVVTIMGHVDHGKTSLLDYIRRAKVAAGEAGGITQHIGAYSVETDNGRIAFLDTPGHAAFTAMRARGATATDIVILVVAADDGVMPQTKEAVQHSKAAGVPLIVAVNKMDKESADPDRVKTELSQLEVISEEWGGEHQFVNVSAKTGEGIDALLEAISLQAELLDLKAPPTGSAKGIVIESRLDKGRGPVASVLVQEGQLKAGDILLCGIEYGRVRAMRDENGKDVAIAGPSTPVEVLGLSGVPVAGEDALVVQDERKAREVATKRNAKQREIKLAKQQKAKLENMFANMEAGDVSELNIVLKADVQGSVEAISDSLTKLSTSEVKVNIVGSGVGGITETDASLAAASSAIVVGFNVRADASARRVIEAEEIDLRYYSVIYSLIDEVKMAMTGMLAPEFKQEIIGLAEVRDVFKSPKLGAIAGCMVVEGTIKRSNPIRVLRENVVIYEGELESLRRFKDDVQEVRNGVECGIGVKNYNDVKVGDQIEVFEIVQVEREL</sequence>